<dbReference type="EC" id="3.6.1.7"/>
<dbReference type="EMBL" id="AE017198">
    <property type="protein sequence ID" value="AAS09400.1"/>
    <property type="molecule type" value="Genomic_DNA"/>
</dbReference>
<dbReference type="RefSeq" id="WP_011162323.1">
    <property type="nucleotide sequence ID" value="NC_005362.1"/>
</dbReference>
<dbReference type="SMR" id="Q74ID8"/>
<dbReference type="KEGG" id="ljo:LJ_1628"/>
<dbReference type="eggNOG" id="COG1254">
    <property type="taxonomic scope" value="Bacteria"/>
</dbReference>
<dbReference type="HOGENOM" id="CLU_141932_2_1_9"/>
<dbReference type="Proteomes" id="UP000000581">
    <property type="component" value="Chromosome"/>
</dbReference>
<dbReference type="GO" id="GO:0003998">
    <property type="term" value="F:acylphosphatase activity"/>
    <property type="evidence" value="ECO:0007669"/>
    <property type="project" value="UniProtKB-EC"/>
</dbReference>
<dbReference type="Gene3D" id="3.30.70.100">
    <property type="match status" value="1"/>
</dbReference>
<dbReference type="InterPro" id="IPR020456">
    <property type="entry name" value="Acylphosphatase"/>
</dbReference>
<dbReference type="InterPro" id="IPR001792">
    <property type="entry name" value="Acylphosphatase-like_dom"/>
</dbReference>
<dbReference type="InterPro" id="IPR036046">
    <property type="entry name" value="Acylphosphatase-like_dom_sf"/>
</dbReference>
<dbReference type="InterPro" id="IPR017968">
    <property type="entry name" value="Acylphosphatase_CS"/>
</dbReference>
<dbReference type="PANTHER" id="PTHR47268">
    <property type="entry name" value="ACYLPHOSPHATASE"/>
    <property type="match status" value="1"/>
</dbReference>
<dbReference type="PANTHER" id="PTHR47268:SF4">
    <property type="entry name" value="ACYLPHOSPHATASE"/>
    <property type="match status" value="1"/>
</dbReference>
<dbReference type="Pfam" id="PF00708">
    <property type="entry name" value="Acylphosphatase"/>
    <property type="match status" value="1"/>
</dbReference>
<dbReference type="SUPFAM" id="SSF54975">
    <property type="entry name" value="Acylphosphatase/BLUF domain-like"/>
    <property type="match status" value="1"/>
</dbReference>
<dbReference type="PROSITE" id="PS00150">
    <property type="entry name" value="ACYLPHOSPHATASE_1"/>
    <property type="match status" value="1"/>
</dbReference>
<dbReference type="PROSITE" id="PS51160">
    <property type="entry name" value="ACYLPHOSPHATASE_3"/>
    <property type="match status" value="1"/>
</dbReference>
<accession>Q74ID8</accession>
<comment type="catalytic activity">
    <reaction>
        <text>an acyl phosphate + H2O = a carboxylate + phosphate + H(+)</text>
        <dbReference type="Rhea" id="RHEA:14965"/>
        <dbReference type="ChEBI" id="CHEBI:15377"/>
        <dbReference type="ChEBI" id="CHEBI:15378"/>
        <dbReference type="ChEBI" id="CHEBI:29067"/>
        <dbReference type="ChEBI" id="CHEBI:43474"/>
        <dbReference type="ChEBI" id="CHEBI:59918"/>
        <dbReference type="EC" id="3.6.1.7"/>
    </reaction>
</comment>
<comment type="similarity">
    <text evidence="2">Belongs to the acylphosphatase family.</text>
</comment>
<organism>
    <name type="scientific">Lactobacillus johnsonii (strain CNCM I-12250 / La1 / NCC 533)</name>
    <dbReference type="NCBI Taxonomy" id="257314"/>
    <lineage>
        <taxon>Bacteria</taxon>
        <taxon>Bacillati</taxon>
        <taxon>Bacillota</taxon>
        <taxon>Bacilli</taxon>
        <taxon>Lactobacillales</taxon>
        <taxon>Lactobacillaceae</taxon>
        <taxon>Lactobacillus</taxon>
    </lineage>
</organism>
<name>ACYP_LACJO</name>
<keyword id="KW-0378">Hydrolase</keyword>
<protein>
    <recommendedName>
        <fullName>Acylphosphatase</fullName>
        <ecNumber>3.6.1.7</ecNumber>
    </recommendedName>
    <alternativeName>
        <fullName>Acylphosphate phosphohydrolase</fullName>
    </alternativeName>
</protein>
<proteinExistence type="inferred from homology"/>
<feature type="chain" id="PRO_0000326727" description="Acylphosphatase">
    <location>
        <begin position="1"/>
        <end position="91"/>
    </location>
</feature>
<feature type="domain" description="Acylphosphatase-like" evidence="1">
    <location>
        <begin position="3"/>
        <end position="91"/>
    </location>
</feature>
<feature type="active site" evidence="1">
    <location>
        <position position="18"/>
    </location>
</feature>
<feature type="active site" evidence="1">
    <location>
        <position position="36"/>
    </location>
</feature>
<gene>
    <name type="primary">acyP</name>
    <name type="ordered locus">LJ_1628</name>
</gene>
<evidence type="ECO:0000255" key="1">
    <source>
        <dbReference type="PROSITE-ProRule" id="PRU00520"/>
    </source>
</evidence>
<evidence type="ECO:0000305" key="2"/>
<sequence length="91" mass="9995">MKTVTMRVTGLVQGVGFRWTTQMIAQELGITGTVKNNPDGSVSIVAQGDELPLEHFIKKIKASPSVAAHVDHVDLKIIPNTEKFTRFSVVY</sequence>
<reference key="1">
    <citation type="journal article" date="2004" name="Proc. Natl. Acad. Sci. U.S.A.">
        <title>The genome sequence of the probiotic intestinal bacterium Lactobacillus johnsonii NCC 533.</title>
        <authorList>
            <person name="Pridmore R.D."/>
            <person name="Berger B."/>
            <person name="Desiere F."/>
            <person name="Vilanova D."/>
            <person name="Barretto C."/>
            <person name="Pittet A.-C."/>
            <person name="Zwahlen M.-C."/>
            <person name="Rouvet M."/>
            <person name="Altermann E."/>
            <person name="Barrangou R."/>
            <person name="Mollet B."/>
            <person name="Mercenier A."/>
            <person name="Klaenhammer T."/>
            <person name="Arigoni F."/>
            <person name="Schell M.A."/>
        </authorList>
    </citation>
    <scope>NUCLEOTIDE SEQUENCE [LARGE SCALE GENOMIC DNA]</scope>
    <source>
        <strain>CNCM I-1225 / La1 / NCC 533</strain>
    </source>
</reference>